<comment type="function">
    <text>Tubulin is the major constituent of microtubules, a cylinder consisting of laterally associated linear protofilaments composed of alpha- and beta-tubulin heterodimers. Microtubules grow by the addition of GTP-tubulin dimers to the microtubule end, where a stabilizing cap forms. Below the cap, tubulin dimers are in GDP-bound state, owing to GTPase activity of alpha-tubulin.</text>
</comment>
<comment type="cofactor">
    <cofactor evidence="3">
        <name>Mg(2+)</name>
        <dbReference type="ChEBI" id="CHEBI:18420"/>
    </cofactor>
</comment>
<comment type="subunit">
    <text>Dimer of alpha and beta chains. A typical microtubule is a hollow water-filled tube with an outer diameter of 25 nm and an inner diameter of 15 nM. Alpha-beta heterodimers associate head-to-tail to form protofilaments running lengthwise along the microtubule wall with the beta-tubulin subunit facing the microtubule plus end conferring a structural polarity. Microtubules usually have 13 protofilaments but different protofilament numbers can be found in some organisms and specialized cells.</text>
</comment>
<comment type="subcellular location">
    <subcellularLocation>
        <location>Cytoplasm</location>
        <location>Cytoskeleton</location>
    </subcellularLocation>
</comment>
<comment type="tissue specificity">
    <text>Nervous system specific.</text>
</comment>
<comment type="domain">
    <text evidence="2">The MREI motif is common among all beta-tubulin isoforms and may be critical for tubulin autoregulation.</text>
</comment>
<comment type="PTM">
    <text evidence="1">Some glutamate residues at the C-terminus are polyglycylated, resulting in polyglycine chains on the gamma-carboxyl group. Glycylation is mainly limited to tubulin incorporated into axonemes (cilia and flagella) whereas glutamylation is prevalent in neuronal cells, centrioles, axonemes, and the mitotic spindle. Both modifications can coexist on the same protein on adjacent residues, and lowering polyglycylation levels increases polyglutamylation, and reciprocally. The precise function of polyglycylation is still unclear.</text>
</comment>
<comment type="PTM">
    <text evidence="1 6">Some glutamate residues at the C-terminus are polyglutamylated, resulting in polyglutamate chains on the gamma-carboxyl group (By similarity). Polyglutamylation plays a key role in microtubule severing by spastin (SPAST). SPAST preferentially recognizes and acts on microtubules decorated with short polyglutamate tails: severing activity by SPAST increases as the number of glutamates per tubulin rises from one to eight, but decreases beyond this glutamylation threshold (By similarity).</text>
</comment>
<comment type="similarity">
    <text evidence="7">Belongs to the tubulin family.</text>
</comment>
<sequence>MREIVHLQAGQCGNQIGAKFWEVISDEHGIDPTGSYHGDSDLQLERINVYYNEATGNKFVPRAILVDLEPGTMDSVRSGPFGQIFRPDNFVFGQSGAGNNWAKGHYTEGAELVDSVLDVVRKESESCDCLQGFQLTHSLGGGTGSGMGTLLISKIREEYPDRIMNTFSVMPSPKVSDTVVEPYNATLSVHQLVENTDETYCIDNEALYDICFRTLKLTTPTYGDLNHLVSATMSGVTTCLRFPGQLNADLRKLAVNMVPFPRLHFFMPGFAPLTSRGSQQYRALTVPELTQQMFDSKNMMAACDPRHGRYLTVAAIFRGRMSMKEVDEQMLNVQNKSSSYFVEWIPNNVKTAVCDIPPRGLKMSATFIGNSTAIQELFKRISEQFTAMFRRKAFLHWYTGEGMDEMEFTEAESNMNDLVSEYQQYQDATADEQGEFEEEEDEA</sequence>
<name>TBB2_XENLA</name>
<feature type="chain" id="PRO_0000048271" description="Tubulin beta-2 chain">
    <location>
        <begin position="1"/>
        <end position="443"/>
    </location>
</feature>
<feature type="short sequence motif" description="MREI motif" evidence="2">
    <location>
        <begin position="1"/>
        <end position="4"/>
    </location>
</feature>
<feature type="binding site" evidence="4">
    <location>
        <position position="11"/>
    </location>
    <ligand>
        <name>GTP</name>
        <dbReference type="ChEBI" id="CHEBI:37565"/>
    </ligand>
</feature>
<feature type="binding site" evidence="3">
    <location>
        <position position="69"/>
    </location>
    <ligand>
        <name>GTP</name>
        <dbReference type="ChEBI" id="CHEBI:37565"/>
    </ligand>
</feature>
<feature type="binding site" evidence="3">
    <location>
        <position position="69"/>
    </location>
    <ligand>
        <name>Mg(2+)</name>
        <dbReference type="ChEBI" id="CHEBI:18420"/>
    </ligand>
</feature>
<feature type="binding site" evidence="4">
    <location>
        <position position="138"/>
    </location>
    <ligand>
        <name>GTP</name>
        <dbReference type="ChEBI" id="CHEBI:37565"/>
    </ligand>
</feature>
<feature type="binding site" evidence="4">
    <location>
        <position position="142"/>
    </location>
    <ligand>
        <name>GTP</name>
        <dbReference type="ChEBI" id="CHEBI:37565"/>
    </ligand>
</feature>
<feature type="binding site" evidence="4">
    <location>
        <position position="143"/>
    </location>
    <ligand>
        <name>GTP</name>
        <dbReference type="ChEBI" id="CHEBI:37565"/>
    </ligand>
</feature>
<feature type="binding site" evidence="4">
    <location>
        <position position="144"/>
    </location>
    <ligand>
        <name>GTP</name>
        <dbReference type="ChEBI" id="CHEBI:37565"/>
    </ligand>
</feature>
<feature type="binding site" evidence="4">
    <location>
        <position position="204"/>
    </location>
    <ligand>
        <name>GTP</name>
        <dbReference type="ChEBI" id="CHEBI:37565"/>
    </ligand>
</feature>
<feature type="binding site" evidence="4">
    <location>
        <position position="226"/>
    </location>
    <ligand>
        <name>GTP</name>
        <dbReference type="ChEBI" id="CHEBI:37565"/>
    </ligand>
</feature>
<feature type="modified residue" description="5-glutamyl polyglutamate" evidence="5">
    <location>
        <position position="438"/>
    </location>
</feature>
<organism>
    <name type="scientific">Xenopus laevis</name>
    <name type="common">African clawed frog</name>
    <dbReference type="NCBI Taxonomy" id="8355"/>
    <lineage>
        <taxon>Eukaryota</taxon>
        <taxon>Metazoa</taxon>
        <taxon>Chordata</taxon>
        <taxon>Craniata</taxon>
        <taxon>Vertebrata</taxon>
        <taxon>Euteleostomi</taxon>
        <taxon>Amphibia</taxon>
        <taxon>Batrachia</taxon>
        <taxon>Anura</taxon>
        <taxon>Pipoidea</taxon>
        <taxon>Pipidae</taxon>
        <taxon>Xenopodinae</taxon>
        <taxon>Xenopus</taxon>
        <taxon>Xenopus</taxon>
    </lineage>
</organism>
<dbReference type="EMBL" id="X15798">
    <property type="protein sequence ID" value="CAA33798.1"/>
    <property type="molecule type" value="mRNA"/>
</dbReference>
<dbReference type="EMBL" id="BC044030">
    <property type="protein sequence ID" value="AAH44030.1"/>
    <property type="molecule type" value="mRNA"/>
</dbReference>
<dbReference type="PIR" id="S05968">
    <property type="entry name" value="S05968"/>
</dbReference>
<dbReference type="SMR" id="P13602"/>
<dbReference type="BioGRID" id="97463">
    <property type="interactions" value="4"/>
</dbReference>
<dbReference type="IntAct" id="P13602">
    <property type="interactions" value="3"/>
</dbReference>
<dbReference type="DNASU" id="379220"/>
<dbReference type="GeneID" id="379220"/>
<dbReference type="KEGG" id="xla:379220"/>
<dbReference type="AGR" id="Xenbase:XB-GENE-866032"/>
<dbReference type="CTD" id="379220"/>
<dbReference type="Xenbase" id="XB-GENE-866032">
    <property type="gene designation" value="tubb2b.S"/>
</dbReference>
<dbReference type="OMA" id="DICFRTM"/>
<dbReference type="OrthoDB" id="1662883at2759"/>
<dbReference type="Proteomes" id="UP000186698">
    <property type="component" value="Chromosome 6S"/>
</dbReference>
<dbReference type="Bgee" id="379220">
    <property type="expression patterns" value="Expressed in brain and 12 other cell types or tissues"/>
</dbReference>
<dbReference type="GO" id="GO:0005737">
    <property type="term" value="C:cytoplasm"/>
    <property type="evidence" value="ECO:0000318"/>
    <property type="project" value="GO_Central"/>
</dbReference>
<dbReference type="GO" id="GO:0005874">
    <property type="term" value="C:microtubule"/>
    <property type="evidence" value="ECO:0000318"/>
    <property type="project" value="GO_Central"/>
</dbReference>
<dbReference type="GO" id="GO:0005525">
    <property type="term" value="F:GTP binding"/>
    <property type="evidence" value="ECO:0000318"/>
    <property type="project" value="GO_Central"/>
</dbReference>
<dbReference type="GO" id="GO:0003924">
    <property type="term" value="F:GTPase activity"/>
    <property type="evidence" value="ECO:0007669"/>
    <property type="project" value="InterPro"/>
</dbReference>
<dbReference type="GO" id="GO:0046872">
    <property type="term" value="F:metal ion binding"/>
    <property type="evidence" value="ECO:0007669"/>
    <property type="project" value="UniProtKB-KW"/>
</dbReference>
<dbReference type="GO" id="GO:0005200">
    <property type="term" value="F:structural constituent of cytoskeleton"/>
    <property type="evidence" value="ECO:0000318"/>
    <property type="project" value="GO_Central"/>
</dbReference>
<dbReference type="GO" id="GO:0000226">
    <property type="term" value="P:microtubule cytoskeleton organization"/>
    <property type="evidence" value="ECO:0000318"/>
    <property type="project" value="GO_Central"/>
</dbReference>
<dbReference type="GO" id="GO:0000278">
    <property type="term" value="P:mitotic cell cycle"/>
    <property type="evidence" value="ECO:0000318"/>
    <property type="project" value="GO_Central"/>
</dbReference>
<dbReference type="CDD" id="cd02187">
    <property type="entry name" value="beta_tubulin"/>
    <property type="match status" value="1"/>
</dbReference>
<dbReference type="FunFam" id="1.10.287.600:FF:000006">
    <property type="entry name" value="Tubulin beta chain"/>
    <property type="match status" value="1"/>
</dbReference>
<dbReference type="FunFam" id="3.30.1330.20:FF:000002">
    <property type="entry name" value="Tubulin beta chain"/>
    <property type="match status" value="1"/>
</dbReference>
<dbReference type="FunFam" id="3.40.50.1440:FF:000003">
    <property type="entry name" value="Tubulin beta chain"/>
    <property type="match status" value="1"/>
</dbReference>
<dbReference type="Gene3D" id="1.10.287.600">
    <property type="entry name" value="Helix hairpin bin"/>
    <property type="match status" value="1"/>
</dbReference>
<dbReference type="Gene3D" id="3.30.1330.20">
    <property type="entry name" value="Tubulin/FtsZ, C-terminal domain"/>
    <property type="match status" value="1"/>
</dbReference>
<dbReference type="Gene3D" id="3.40.50.1440">
    <property type="entry name" value="Tubulin/FtsZ, GTPase domain"/>
    <property type="match status" value="1"/>
</dbReference>
<dbReference type="InterPro" id="IPR013838">
    <property type="entry name" value="Beta-tubulin_BS"/>
</dbReference>
<dbReference type="InterPro" id="IPR002453">
    <property type="entry name" value="Beta_tubulin"/>
</dbReference>
<dbReference type="InterPro" id="IPR008280">
    <property type="entry name" value="Tub_FtsZ_C"/>
</dbReference>
<dbReference type="InterPro" id="IPR000217">
    <property type="entry name" value="Tubulin"/>
</dbReference>
<dbReference type="InterPro" id="IPR037103">
    <property type="entry name" value="Tubulin/FtsZ-like_C"/>
</dbReference>
<dbReference type="InterPro" id="IPR018316">
    <property type="entry name" value="Tubulin/FtsZ_2-layer-sand-dom"/>
</dbReference>
<dbReference type="InterPro" id="IPR036525">
    <property type="entry name" value="Tubulin/FtsZ_GTPase_sf"/>
</dbReference>
<dbReference type="InterPro" id="IPR023123">
    <property type="entry name" value="Tubulin_C"/>
</dbReference>
<dbReference type="InterPro" id="IPR017975">
    <property type="entry name" value="Tubulin_CS"/>
</dbReference>
<dbReference type="InterPro" id="IPR003008">
    <property type="entry name" value="Tubulin_FtsZ_GTPase"/>
</dbReference>
<dbReference type="PANTHER" id="PTHR11588">
    <property type="entry name" value="TUBULIN"/>
    <property type="match status" value="1"/>
</dbReference>
<dbReference type="Pfam" id="PF00091">
    <property type="entry name" value="Tubulin"/>
    <property type="match status" value="1"/>
</dbReference>
<dbReference type="Pfam" id="PF03953">
    <property type="entry name" value="Tubulin_C"/>
    <property type="match status" value="1"/>
</dbReference>
<dbReference type="PRINTS" id="PR01163">
    <property type="entry name" value="BETATUBULIN"/>
</dbReference>
<dbReference type="PRINTS" id="PR01161">
    <property type="entry name" value="TUBULIN"/>
</dbReference>
<dbReference type="SMART" id="SM00864">
    <property type="entry name" value="Tubulin"/>
    <property type="match status" value="1"/>
</dbReference>
<dbReference type="SMART" id="SM00865">
    <property type="entry name" value="Tubulin_C"/>
    <property type="match status" value="1"/>
</dbReference>
<dbReference type="SUPFAM" id="SSF55307">
    <property type="entry name" value="Tubulin C-terminal domain-like"/>
    <property type="match status" value="1"/>
</dbReference>
<dbReference type="SUPFAM" id="SSF52490">
    <property type="entry name" value="Tubulin nucleotide-binding domain-like"/>
    <property type="match status" value="1"/>
</dbReference>
<dbReference type="PROSITE" id="PS00227">
    <property type="entry name" value="TUBULIN"/>
    <property type="match status" value="1"/>
</dbReference>
<dbReference type="PROSITE" id="PS00228">
    <property type="entry name" value="TUBULIN_B_AUTOREG"/>
    <property type="match status" value="1"/>
</dbReference>
<accession>P13602</accession>
<keyword id="KW-0963">Cytoplasm</keyword>
<keyword id="KW-0206">Cytoskeleton</keyword>
<keyword id="KW-0342">GTP-binding</keyword>
<keyword id="KW-1017">Isopeptide bond</keyword>
<keyword id="KW-0460">Magnesium</keyword>
<keyword id="KW-0479">Metal-binding</keyword>
<keyword id="KW-0493">Microtubule</keyword>
<keyword id="KW-0547">Nucleotide-binding</keyword>
<keyword id="KW-1185">Reference proteome</keyword>
<gene>
    <name type="primary">tubb2</name>
</gene>
<reference key="1">
    <citation type="journal article" date="1989" name="Nucleic Acids Res.">
        <title>The sequence of a nervous system-specific, class II beta-tubulin gene from Xenopus laevis.</title>
        <authorList>
            <person name="Good P.J."/>
            <person name="Richter K."/>
            <person name="Dawid I.B."/>
        </authorList>
    </citation>
    <scope>NUCLEOTIDE SEQUENCE [MRNA]</scope>
</reference>
<reference key="2">
    <citation type="submission" date="2003-01" db="EMBL/GenBank/DDBJ databases">
        <authorList>
            <consortium name="NIH - Xenopus Gene Collection (XGC) project"/>
        </authorList>
    </citation>
    <scope>NUCLEOTIDE SEQUENCE [LARGE SCALE MRNA]</scope>
    <source>
        <tissue>Embryo</tissue>
    </source>
</reference>
<evidence type="ECO:0000250" key="1">
    <source>
        <dbReference type="UniProtKB" id="A2AQ07"/>
    </source>
</evidence>
<evidence type="ECO:0000250" key="2">
    <source>
        <dbReference type="UniProtKB" id="P07437"/>
    </source>
</evidence>
<evidence type="ECO:0000250" key="3">
    <source>
        <dbReference type="UniProtKB" id="P68363"/>
    </source>
</evidence>
<evidence type="ECO:0000250" key="4">
    <source>
        <dbReference type="UniProtKB" id="Q13509"/>
    </source>
</evidence>
<evidence type="ECO:0000250" key="5">
    <source>
        <dbReference type="UniProtKB" id="Q2T9S0"/>
    </source>
</evidence>
<evidence type="ECO:0000250" key="6">
    <source>
        <dbReference type="UniProtKB" id="Q71U36"/>
    </source>
</evidence>
<evidence type="ECO:0000305" key="7"/>
<proteinExistence type="evidence at transcript level"/>
<protein>
    <recommendedName>
        <fullName>Tubulin beta-2 chain</fullName>
    </recommendedName>
    <alternativeName>
        <fullName>Beta-2-tubulin</fullName>
    </alternativeName>
</protein>